<dbReference type="PIR" id="S06906">
    <property type="entry name" value="S06906"/>
</dbReference>
<dbReference type="SMR" id="P19133"/>
<dbReference type="STRING" id="9823.ENSSSCP00000003417"/>
<dbReference type="PaxDb" id="9823-ENSSSCP00000003417"/>
<dbReference type="PeptideAtlas" id="P19133"/>
<dbReference type="eggNOG" id="KOG2332">
    <property type="taxonomic scope" value="Eukaryota"/>
</dbReference>
<dbReference type="HOGENOM" id="CLU_065681_4_0_1"/>
<dbReference type="InParanoid" id="P19133"/>
<dbReference type="Proteomes" id="UP000008227">
    <property type="component" value="Unplaced"/>
</dbReference>
<dbReference type="Proteomes" id="UP000314985">
    <property type="component" value="Unplaced"/>
</dbReference>
<dbReference type="Proteomes" id="UP000694570">
    <property type="component" value="Unplaced"/>
</dbReference>
<dbReference type="Proteomes" id="UP000694571">
    <property type="component" value="Unplaced"/>
</dbReference>
<dbReference type="Proteomes" id="UP000694720">
    <property type="component" value="Unplaced"/>
</dbReference>
<dbReference type="Proteomes" id="UP000694722">
    <property type="component" value="Unplaced"/>
</dbReference>
<dbReference type="Proteomes" id="UP000694723">
    <property type="component" value="Unplaced"/>
</dbReference>
<dbReference type="Proteomes" id="UP000694724">
    <property type="component" value="Unplaced"/>
</dbReference>
<dbReference type="Proteomes" id="UP000694725">
    <property type="component" value="Unplaced"/>
</dbReference>
<dbReference type="Proteomes" id="UP000694726">
    <property type="component" value="Unplaced"/>
</dbReference>
<dbReference type="Proteomes" id="UP000694727">
    <property type="component" value="Unplaced"/>
</dbReference>
<dbReference type="Proteomes" id="UP000694728">
    <property type="component" value="Unplaced"/>
</dbReference>
<dbReference type="GO" id="GO:0044754">
    <property type="term" value="C:autolysosome"/>
    <property type="evidence" value="ECO:0007669"/>
    <property type="project" value="UniProtKB-SubCell"/>
</dbReference>
<dbReference type="GO" id="GO:0005776">
    <property type="term" value="C:autophagosome"/>
    <property type="evidence" value="ECO:0007669"/>
    <property type="project" value="UniProtKB-SubCell"/>
</dbReference>
<dbReference type="GO" id="GO:0031410">
    <property type="term" value="C:cytoplasmic vesicle"/>
    <property type="evidence" value="ECO:0007669"/>
    <property type="project" value="UniProtKB-KW"/>
</dbReference>
<dbReference type="GO" id="GO:0070288">
    <property type="term" value="C:ferritin complex"/>
    <property type="evidence" value="ECO:0000250"/>
    <property type="project" value="UniProtKB"/>
</dbReference>
<dbReference type="GO" id="GO:0008199">
    <property type="term" value="F:ferric iron binding"/>
    <property type="evidence" value="ECO:0007669"/>
    <property type="project" value="InterPro"/>
</dbReference>
<dbReference type="GO" id="GO:0005506">
    <property type="term" value="F:iron ion binding"/>
    <property type="evidence" value="ECO:0000250"/>
    <property type="project" value="UniProtKB"/>
</dbReference>
<dbReference type="GO" id="GO:0006879">
    <property type="term" value="P:intracellular iron ion homeostasis"/>
    <property type="evidence" value="ECO:0007669"/>
    <property type="project" value="UniProtKB-KW"/>
</dbReference>
<dbReference type="GO" id="GO:0006826">
    <property type="term" value="P:iron ion transport"/>
    <property type="evidence" value="ECO:0007669"/>
    <property type="project" value="InterPro"/>
</dbReference>
<dbReference type="Gene3D" id="1.20.1260.10">
    <property type="match status" value="1"/>
</dbReference>
<dbReference type="InterPro" id="IPR001519">
    <property type="entry name" value="Ferritin"/>
</dbReference>
<dbReference type="InterPro" id="IPR012347">
    <property type="entry name" value="Ferritin-like"/>
</dbReference>
<dbReference type="InterPro" id="IPR009040">
    <property type="entry name" value="Ferritin-like_diiron"/>
</dbReference>
<dbReference type="InterPro" id="IPR009078">
    <property type="entry name" value="Ferritin-like_SF"/>
</dbReference>
<dbReference type="InterPro" id="IPR014034">
    <property type="entry name" value="Ferritin_CS"/>
</dbReference>
<dbReference type="InterPro" id="IPR008331">
    <property type="entry name" value="Ferritin_DPS_dom"/>
</dbReference>
<dbReference type="PANTHER" id="PTHR11431">
    <property type="entry name" value="FERRITIN"/>
    <property type="match status" value="1"/>
</dbReference>
<dbReference type="PANTHER" id="PTHR11431:SF47">
    <property type="entry name" value="FERRITIN LIGHT CHAIN"/>
    <property type="match status" value="1"/>
</dbReference>
<dbReference type="Pfam" id="PF00210">
    <property type="entry name" value="Ferritin"/>
    <property type="match status" value="1"/>
</dbReference>
<dbReference type="SUPFAM" id="SSF47240">
    <property type="entry name" value="Ferritin-like"/>
    <property type="match status" value="1"/>
</dbReference>
<dbReference type="PROSITE" id="PS00204">
    <property type="entry name" value="FERRITIN_2"/>
    <property type="match status" value="1"/>
</dbReference>
<dbReference type="PROSITE" id="PS50905">
    <property type="entry name" value="FERRITIN_LIKE"/>
    <property type="match status" value="1"/>
</dbReference>
<protein>
    <recommendedName>
        <fullName>Ferritin light chain</fullName>
        <shortName>Ferritin L subunit</shortName>
    </recommendedName>
</protein>
<proteinExistence type="evidence at protein level"/>
<gene>
    <name type="primary">FTL</name>
</gene>
<keyword id="KW-0963">Cytoplasm</keyword>
<keyword id="KW-0968">Cytoplasmic vesicle</keyword>
<keyword id="KW-0903">Direct protein sequencing</keyword>
<keyword id="KW-0408">Iron</keyword>
<keyword id="KW-0409">Iron storage</keyword>
<keyword id="KW-0458">Lysosome</keyword>
<keyword id="KW-0479">Metal-binding</keyword>
<keyword id="KW-1185">Reference proteome</keyword>
<evidence type="ECO:0000250" key="1"/>
<evidence type="ECO:0000250" key="2">
    <source>
        <dbReference type="UniProtKB" id="P02792"/>
    </source>
</evidence>
<evidence type="ECO:0000250" key="3">
    <source>
        <dbReference type="UniProtKB" id="P29391"/>
    </source>
</evidence>
<evidence type="ECO:0000255" key="4">
    <source>
        <dbReference type="PROSITE-ProRule" id="PRU00085"/>
    </source>
</evidence>
<evidence type="ECO:0000305" key="5"/>
<reference key="1">
    <citation type="journal article" date="1987" name="Arch. Biochem. Biophys.">
        <title>Isolation and partial amino acid sequence of three subunit species of porcine spleen ferritin: evidence of multiple H subunits.</title>
        <authorList>
            <person name="Collawn J.F. Jr."/>
            <person name="Gowan L.K."/>
            <person name="Crow H."/>
            <person name="Schwabe C."/>
            <person name="Fish W.W."/>
        </authorList>
    </citation>
    <scope>PROTEIN SEQUENCE</scope>
    <source>
        <tissue>Spleen</tissue>
    </source>
</reference>
<organism>
    <name type="scientific">Sus scrofa</name>
    <name type="common">Pig</name>
    <dbReference type="NCBI Taxonomy" id="9823"/>
    <lineage>
        <taxon>Eukaryota</taxon>
        <taxon>Metazoa</taxon>
        <taxon>Chordata</taxon>
        <taxon>Craniata</taxon>
        <taxon>Vertebrata</taxon>
        <taxon>Euteleostomi</taxon>
        <taxon>Mammalia</taxon>
        <taxon>Eutheria</taxon>
        <taxon>Laurasiatheria</taxon>
        <taxon>Artiodactyla</taxon>
        <taxon>Suina</taxon>
        <taxon>Suidae</taxon>
        <taxon>Sus</taxon>
    </lineage>
</organism>
<feature type="chain" id="PRO_0000201063" description="Ferritin light chain">
    <location>
        <begin position="1" status="less than"/>
        <end position="78"/>
    </location>
</feature>
<feature type="domain" description="Ferritin-like diiron" evidence="4">
    <location>
        <begin position="1" status="less than"/>
        <end position="59"/>
    </location>
</feature>
<feature type="non-terminal residue">
    <location>
        <position position="1"/>
    </location>
</feature>
<sequence length="78" mass="8784">EAALHLEKGLNQALVDLHALGSARADPHLCDFLENHFLDEEVKLIKKMGDHLTNLRRLSGPQAGLGEYLFERLTLKHD</sequence>
<comment type="function">
    <text evidence="1 2">Stores iron in a soluble, non-toxic, readily available form. Important for iron homeostasis. Iron is taken up in the ferrous form and deposited as ferric hydroxides after oxidation. Also plays a role in delivery of iron to cells. Mediates iron uptake in capsule cells of the developing kidney (By similarity). Delivery to lysosomes by the cargo receptor NCOA4 for autophagic degradation and release or iron (By similarity).</text>
</comment>
<comment type="subunit">
    <text evidence="2">Oligomer of 24 subunits. There are two types of subunits: L (light) chain and H (heavy) chain. The major chain can be light or heavy, depending on the species and tissue type. The functional molecule forms a roughly spherical shell with a diameter of 12 nm and contains a central cavity into which the insoluble mineral iron core is deposited. Interacts with NCOA4 (By similarity).</text>
</comment>
<comment type="subcellular location">
    <subcellularLocation>
        <location evidence="2">Cytoplasmic vesicle</location>
        <location evidence="2">Autophagosome</location>
    </subcellularLocation>
    <subcellularLocation>
        <location evidence="3">Cytoplasm</location>
    </subcellularLocation>
    <subcellularLocation>
        <location evidence="3">Autolysosome</location>
    </subcellularLocation>
</comment>
<comment type="similarity">
    <text evidence="5">Belongs to the ferritin family.</text>
</comment>
<name>FRIL_PIG</name>
<accession>P19133</accession>